<sequence length="243" mass="27880">MATIDLQKKSVKIVLEKKQLTKVTARVGLVLDITGSMRPLYKNGTVQNVVERILAVADQFDDNGLLDVWVYDNEFSRLKPVSEKDFSGYVDREILNNDRLHKFGRNDEPPVMKDVLRKYVTEEPSSYPAFIVFINDGGCKKSIKPIIEASSDKPVFWQFVGIGNGNFDFLNKLDTLEGRVIDNTNFLHIEEIDRISDDELYDALLAEFPFWLKEAKEKGIVREQEPPAEKPKKKGFFSRLFSK</sequence>
<proteinExistence type="predicted"/>
<accession>P42250</accession>
<evidence type="ECO:0000255" key="1">
    <source>
        <dbReference type="PROSITE-ProRule" id="PRU00219"/>
    </source>
</evidence>
<evidence type="ECO:0000256" key="2">
    <source>
        <dbReference type="SAM" id="MobiDB-lite"/>
    </source>
</evidence>
<evidence type="ECO:0000305" key="3"/>
<dbReference type="EMBL" id="D30808">
    <property type="protein sequence ID" value="BAA06482.1"/>
    <property type="status" value="ALT_FRAME"/>
    <property type="molecule type" value="Genomic_DNA"/>
</dbReference>
<dbReference type="EMBL" id="AL009126">
    <property type="protein sequence ID" value="CAB12055.2"/>
    <property type="molecule type" value="Genomic_DNA"/>
</dbReference>
<dbReference type="EMBL" id="U49060">
    <property type="protein sequence ID" value="AAB47802.1"/>
    <property type="molecule type" value="Genomic_DNA"/>
</dbReference>
<dbReference type="PIR" id="C69754">
    <property type="entry name" value="C69754"/>
</dbReference>
<dbReference type="RefSeq" id="NP_388143.2">
    <property type="nucleotide sequence ID" value="NC_000964.3"/>
</dbReference>
<dbReference type="RefSeq" id="WP_003246379.1">
    <property type="nucleotide sequence ID" value="NZ_OZ025638.1"/>
</dbReference>
<dbReference type="SMR" id="P42250"/>
<dbReference type="FunCoup" id="P42250">
    <property type="interactions" value="75"/>
</dbReference>
<dbReference type="STRING" id="224308.BSU02610"/>
<dbReference type="PaxDb" id="224308-BSU02610"/>
<dbReference type="EnsemblBacteria" id="CAB12055">
    <property type="protein sequence ID" value="CAB12055"/>
    <property type="gene ID" value="BSU_02610"/>
</dbReference>
<dbReference type="GeneID" id="938394"/>
<dbReference type="KEGG" id="bsu:BSU02610"/>
<dbReference type="PATRIC" id="fig|224308.179.peg.270"/>
<dbReference type="eggNOG" id="COG2304">
    <property type="taxonomic scope" value="Bacteria"/>
</dbReference>
<dbReference type="InParanoid" id="P42250"/>
<dbReference type="OrthoDB" id="5756874at2"/>
<dbReference type="PhylomeDB" id="P42250"/>
<dbReference type="BioCyc" id="BSUB:BSU02610-MONOMER"/>
<dbReference type="Proteomes" id="UP000001570">
    <property type="component" value="Chromosome"/>
</dbReference>
<dbReference type="InterPro" id="IPR019303">
    <property type="entry name" value="vWA_TerF_C"/>
</dbReference>
<dbReference type="InterPro" id="IPR002035">
    <property type="entry name" value="VWF_A"/>
</dbReference>
<dbReference type="InterPro" id="IPR036465">
    <property type="entry name" value="vWFA_dom_sf"/>
</dbReference>
<dbReference type="Pfam" id="PF10138">
    <property type="entry name" value="vWA-TerF-like"/>
    <property type="match status" value="1"/>
</dbReference>
<dbReference type="SMART" id="SM00327">
    <property type="entry name" value="VWA"/>
    <property type="match status" value="1"/>
</dbReference>
<dbReference type="SUPFAM" id="SSF53300">
    <property type="entry name" value="vWA-like"/>
    <property type="match status" value="1"/>
</dbReference>
<dbReference type="PROSITE" id="PS50234">
    <property type="entry name" value="VWFA"/>
    <property type="match status" value="1"/>
</dbReference>
<gene>
    <name type="primary">ycbR</name>
    <name type="ordered locus">BSU02610</name>
</gene>
<protein>
    <recommendedName>
        <fullName>Uncharacterized protein YcbR</fullName>
    </recommendedName>
    <alternativeName>
        <fullName>ORF17</fullName>
    </alternativeName>
</protein>
<reference key="1">
    <citation type="journal article" date="1995" name="Microbiology">
        <title>Determination of a 21548 bp nucleotide sequence around the 24 degrees region of the Bacillus subtilis chromosome.</title>
        <authorList>
            <person name="Ogawa K."/>
            <person name="Akagawa E."/>
            <person name="Nakamura K."/>
            <person name="Yamane K."/>
        </authorList>
    </citation>
    <scope>NUCLEOTIDE SEQUENCE [GENOMIC DNA]</scope>
    <source>
        <strain>168</strain>
    </source>
</reference>
<reference key="2">
    <citation type="journal article" date="1997" name="Nature">
        <title>The complete genome sequence of the Gram-positive bacterium Bacillus subtilis.</title>
        <authorList>
            <person name="Kunst F."/>
            <person name="Ogasawara N."/>
            <person name="Moszer I."/>
            <person name="Albertini A.M."/>
            <person name="Alloni G."/>
            <person name="Azevedo V."/>
            <person name="Bertero M.G."/>
            <person name="Bessieres P."/>
            <person name="Bolotin A."/>
            <person name="Borchert S."/>
            <person name="Borriss R."/>
            <person name="Boursier L."/>
            <person name="Brans A."/>
            <person name="Braun M."/>
            <person name="Brignell S.C."/>
            <person name="Bron S."/>
            <person name="Brouillet S."/>
            <person name="Bruschi C.V."/>
            <person name="Caldwell B."/>
            <person name="Capuano V."/>
            <person name="Carter N.M."/>
            <person name="Choi S.-K."/>
            <person name="Codani J.-J."/>
            <person name="Connerton I.F."/>
            <person name="Cummings N.J."/>
            <person name="Daniel R.A."/>
            <person name="Denizot F."/>
            <person name="Devine K.M."/>
            <person name="Duesterhoeft A."/>
            <person name="Ehrlich S.D."/>
            <person name="Emmerson P.T."/>
            <person name="Entian K.-D."/>
            <person name="Errington J."/>
            <person name="Fabret C."/>
            <person name="Ferrari E."/>
            <person name="Foulger D."/>
            <person name="Fritz C."/>
            <person name="Fujita M."/>
            <person name="Fujita Y."/>
            <person name="Fuma S."/>
            <person name="Galizzi A."/>
            <person name="Galleron N."/>
            <person name="Ghim S.-Y."/>
            <person name="Glaser P."/>
            <person name="Goffeau A."/>
            <person name="Golightly E.J."/>
            <person name="Grandi G."/>
            <person name="Guiseppi G."/>
            <person name="Guy B.J."/>
            <person name="Haga K."/>
            <person name="Haiech J."/>
            <person name="Harwood C.R."/>
            <person name="Henaut A."/>
            <person name="Hilbert H."/>
            <person name="Holsappel S."/>
            <person name="Hosono S."/>
            <person name="Hullo M.-F."/>
            <person name="Itaya M."/>
            <person name="Jones L.-M."/>
            <person name="Joris B."/>
            <person name="Karamata D."/>
            <person name="Kasahara Y."/>
            <person name="Klaerr-Blanchard M."/>
            <person name="Klein C."/>
            <person name="Kobayashi Y."/>
            <person name="Koetter P."/>
            <person name="Koningstein G."/>
            <person name="Krogh S."/>
            <person name="Kumano M."/>
            <person name="Kurita K."/>
            <person name="Lapidus A."/>
            <person name="Lardinois S."/>
            <person name="Lauber J."/>
            <person name="Lazarevic V."/>
            <person name="Lee S.-M."/>
            <person name="Levine A."/>
            <person name="Liu H."/>
            <person name="Masuda S."/>
            <person name="Mauel C."/>
            <person name="Medigue C."/>
            <person name="Medina N."/>
            <person name="Mellado R.P."/>
            <person name="Mizuno M."/>
            <person name="Moestl D."/>
            <person name="Nakai S."/>
            <person name="Noback M."/>
            <person name="Noone D."/>
            <person name="O'Reilly M."/>
            <person name="Ogawa K."/>
            <person name="Ogiwara A."/>
            <person name="Oudega B."/>
            <person name="Park S.-H."/>
            <person name="Parro V."/>
            <person name="Pohl T.M."/>
            <person name="Portetelle D."/>
            <person name="Porwollik S."/>
            <person name="Prescott A.M."/>
            <person name="Presecan E."/>
            <person name="Pujic P."/>
            <person name="Purnelle B."/>
            <person name="Rapoport G."/>
            <person name="Rey M."/>
            <person name="Reynolds S."/>
            <person name="Rieger M."/>
            <person name="Rivolta C."/>
            <person name="Rocha E."/>
            <person name="Roche B."/>
            <person name="Rose M."/>
            <person name="Sadaie Y."/>
            <person name="Sato T."/>
            <person name="Scanlan E."/>
            <person name="Schleich S."/>
            <person name="Schroeter R."/>
            <person name="Scoffone F."/>
            <person name="Sekiguchi J."/>
            <person name="Sekowska A."/>
            <person name="Seror S.J."/>
            <person name="Serror P."/>
            <person name="Shin B.-S."/>
            <person name="Soldo B."/>
            <person name="Sorokin A."/>
            <person name="Tacconi E."/>
            <person name="Takagi T."/>
            <person name="Takahashi H."/>
            <person name="Takemaru K."/>
            <person name="Takeuchi M."/>
            <person name="Tamakoshi A."/>
            <person name="Tanaka T."/>
            <person name="Terpstra P."/>
            <person name="Tognoni A."/>
            <person name="Tosato V."/>
            <person name="Uchiyama S."/>
            <person name="Vandenbol M."/>
            <person name="Vannier F."/>
            <person name="Vassarotti A."/>
            <person name="Viari A."/>
            <person name="Wambutt R."/>
            <person name="Wedler E."/>
            <person name="Wedler H."/>
            <person name="Weitzenegger T."/>
            <person name="Winters P."/>
            <person name="Wipat A."/>
            <person name="Yamamoto H."/>
            <person name="Yamane K."/>
            <person name="Yasumoto K."/>
            <person name="Yata K."/>
            <person name="Yoshida K."/>
            <person name="Yoshikawa H.-F."/>
            <person name="Zumstein E."/>
            <person name="Yoshikawa H."/>
            <person name="Danchin A."/>
        </authorList>
    </citation>
    <scope>NUCLEOTIDE SEQUENCE [LARGE SCALE GENOMIC DNA]</scope>
    <source>
        <strain>168</strain>
    </source>
</reference>
<reference key="3">
    <citation type="journal article" date="2009" name="Microbiology">
        <title>From a consortium sequence to a unified sequence: the Bacillus subtilis 168 reference genome a decade later.</title>
        <authorList>
            <person name="Barbe V."/>
            <person name="Cruveiller S."/>
            <person name="Kunst F."/>
            <person name="Lenoble P."/>
            <person name="Meurice G."/>
            <person name="Sekowska A."/>
            <person name="Vallenet D."/>
            <person name="Wang T."/>
            <person name="Moszer I."/>
            <person name="Medigue C."/>
            <person name="Danchin A."/>
        </authorList>
    </citation>
    <scope>SEQUENCE REVISION TO 76; 87 AND 118-146</scope>
</reference>
<reference key="4">
    <citation type="journal article" date="1996" name="Microbiology">
        <title>A Bacillus subtilis secreted phosphodiesterase/alkaline phosphatase is the product of a Pho regulon gene, phoD.</title>
        <authorList>
            <person name="Eder S."/>
            <person name="Shi L."/>
            <person name="Jensen K."/>
            <person name="Yamane K."/>
            <person name="Hulett F.M."/>
        </authorList>
    </citation>
    <scope>NUCLEOTIDE SEQUENCE [GENOMIC DNA] OF 221-243</scope>
    <source>
        <strain>168 / JH642</strain>
    </source>
</reference>
<feature type="chain" id="PRO_0000049470" description="Uncharacterized protein YcbR">
    <location>
        <begin position="1"/>
        <end position="243"/>
    </location>
</feature>
<feature type="domain" description="VWFA" evidence="1">
    <location>
        <begin position="26"/>
        <end position="204"/>
    </location>
</feature>
<feature type="region of interest" description="Disordered" evidence="2">
    <location>
        <begin position="222"/>
        <end position="243"/>
    </location>
</feature>
<feature type="compositionally biased region" description="Basic residues" evidence="2">
    <location>
        <begin position="231"/>
        <end position="243"/>
    </location>
</feature>
<feature type="sequence conflict" description="In Ref. 1; BAA06482." evidence="3" ref="1">
    <original>S</original>
    <variation>P</variation>
    <location>
        <position position="76"/>
    </location>
</feature>
<feature type="sequence conflict" description="In Ref. 1; BAA06482." evidence="3" ref="1">
    <original>S</original>
    <variation>P</variation>
    <location>
        <position position="87"/>
    </location>
</feature>
<keyword id="KW-1185">Reference proteome</keyword>
<name>YCBR_BACSU</name>
<organism>
    <name type="scientific">Bacillus subtilis (strain 168)</name>
    <dbReference type="NCBI Taxonomy" id="224308"/>
    <lineage>
        <taxon>Bacteria</taxon>
        <taxon>Bacillati</taxon>
        <taxon>Bacillota</taxon>
        <taxon>Bacilli</taxon>
        <taxon>Bacillales</taxon>
        <taxon>Bacillaceae</taxon>
        <taxon>Bacillus</taxon>
    </lineage>
</organism>
<comment type="sequence caution" evidence="3">
    <conflict type="frameshift">
        <sequence resource="EMBL-CDS" id="BAA06482"/>
    </conflict>
</comment>